<dbReference type="EMBL" id="CU928158">
    <property type="protein sequence ID" value="CAQ87635.1"/>
    <property type="molecule type" value="Genomic_DNA"/>
</dbReference>
<dbReference type="RefSeq" id="WP_000692220.1">
    <property type="nucleotide sequence ID" value="NC_011740.1"/>
</dbReference>
<dbReference type="SMR" id="B7LWN2"/>
<dbReference type="KEGG" id="efe:EFER_0049"/>
<dbReference type="HOGENOM" id="CLU_060196_2_2_6"/>
<dbReference type="OrthoDB" id="9804960at2"/>
<dbReference type="UniPathway" id="UPA00117"/>
<dbReference type="Proteomes" id="UP000000745">
    <property type="component" value="Chromosome"/>
</dbReference>
<dbReference type="GO" id="GO:0009055">
    <property type="term" value="F:electron transfer activity"/>
    <property type="evidence" value="ECO:0007669"/>
    <property type="project" value="InterPro"/>
</dbReference>
<dbReference type="GO" id="GO:0009437">
    <property type="term" value="P:carnitine metabolic process"/>
    <property type="evidence" value="ECO:0007669"/>
    <property type="project" value="UniProtKB-UniRule"/>
</dbReference>
<dbReference type="CDD" id="cd01714">
    <property type="entry name" value="ETF_beta"/>
    <property type="match status" value="1"/>
</dbReference>
<dbReference type="FunFam" id="3.40.50.620:FF:000072">
    <property type="entry name" value="Protein FixA homolog"/>
    <property type="match status" value="1"/>
</dbReference>
<dbReference type="Gene3D" id="3.40.50.620">
    <property type="entry name" value="HUPs"/>
    <property type="match status" value="1"/>
</dbReference>
<dbReference type="HAMAP" id="MF_01055">
    <property type="entry name" value="FixA"/>
    <property type="match status" value="1"/>
</dbReference>
<dbReference type="InterPro" id="IPR000049">
    <property type="entry name" value="ET-Flavoprotein_bsu_CS"/>
</dbReference>
<dbReference type="InterPro" id="IPR014730">
    <property type="entry name" value="ETF_a/b_N"/>
</dbReference>
<dbReference type="InterPro" id="IPR012255">
    <property type="entry name" value="ETF_b"/>
</dbReference>
<dbReference type="InterPro" id="IPR033948">
    <property type="entry name" value="ETF_beta_N"/>
</dbReference>
<dbReference type="InterPro" id="IPR023463">
    <property type="entry name" value="FixA"/>
</dbReference>
<dbReference type="InterPro" id="IPR014729">
    <property type="entry name" value="Rossmann-like_a/b/a_fold"/>
</dbReference>
<dbReference type="NCBIfam" id="NF002888">
    <property type="entry name" value="PRK03359.1"/>
    <property type="match status" value="1"/>
</dbReference>
<dbReference type="NCBIfam" id="NF008998">
    <property type="entry name" value="PRK12342.1"/>
    <property type="match status" value="1"/>
</dbReference>
<dbReference type="PANTHER" id="PTHR21294">
    <property type="entry name" value="ELECTRON TRANSFER FLAVOPROTEIN BETA-SUBUNIT"/>
    <property type="match status" value="1"/>
</dbReference>
<dbReference type="PANTHER" id="PTHR21294:SF17">
    <property type="entry name" value="PROTEIN FIXA"/>
    <property type="match status" value="1"/>
</dbReference>
<dbReference type="Pfam" id="PF01012">
    <property type="entry name" value="ETF"/>
    <property type="match status" value="1"/>
</dbReference>
<dbReference type="PIRSF" id="PIRSF000090">
    <property type="entry name" value="Beta-ETF"/>
    <property type="match status" value="1"/>
</dbReference>
<dbReference type="SMART" id="SM00893">
    <property type="entry name" value="ETF"/>
    <property type="match status" value="1"/>
</dbReference>
<dbReference type="SUPFAM" id="SSF52402">
    <property type="entry name" value="Adenine nucleotide alpha hydrolases-like"/>
    <property type="match status" value="1"/>
</dbReference>
<dbReference type="PROSITE" id="PS01065">
    <property type="entry name" value="ETF_BETA"/>
    <property type="match status" value="1"/>
</dbReference>
<gene>
    <name evidence="1" type="primary">fixA</name>
    <name type="ordered locus">EFER_0049</name>
</gene>
<keyword id="KW-0249">Electron transport</keyword>
<keyword id="KW-0813">Transport</keyword>
<organism>
    <name type="scientific">Escherichia fergusonii (strain ATCC 35469 / DSM 13698 / CCUG 18766 / IAM 14443 / JCM 21226 / LMG 7866 / NBRC 102419 / NCTC 12128 / CDC 0568-73)</name>
    <dbReference type="NCBI Taxonomy" id="585054"/>
    <lineage>
        <taxon>Bacteria</taxon>
        <taxon>Pseudomonadati</taxon>
        <taxon>Pseudomonadota</taxon>
        <taxon>Gammaproteobacteria</taxon>
        <taxon>Enterobacterales</taxon>
        <taxon>Enterobacteriaceae</taxon>
        <taxon>Escherichia</taxon>
    </lineage>
</organism>
<comment type="function">
    <text evidence="1">Required for anaerobic carnitine reduction. May bring reductant to CaiA.</text>
</comment>
<comment type="pathway">
    <text evidence="1">Amine and polyamine metabolism; carnitine metabolism.</text>
</comment>
<comment type="subunit">
    <text evidence="1">Heterodimer of FixA and FixB.</text>
</comment>
<comment type="similarity">
    <text evidence="1">Belongs to the ETF beta-subunit/FixA family.</text>
</comment>
<proteinExistence type="inferred from homology"/>
<evidence type="ECO:0000255" key="1">
    <source>
        <dbReference type="HAMAP-Rule" id="MF_01055"/>
    </source>
</evidence>
<feature type="chain" id="PRO_1000136321" description="Protein FixA">
    <location>
        <begin position="1"/>
        <end position="256"/>
    </location>
</feature>
<protein>
    <recommendedName>
        <fullName evidence="1">Protein FixA</fullName>
    </recommendedName>
</protein>
<sequence>MKIITCYKCVPDEQDIAVNNADGSLDFSKADAKISQYDLNAIEAACQLKQQAAEAQVTALSVGGKALTNAKGRKDVLSRGPDELIVVIDDQFEQALPQQTATALAAAAQKAGFDLILCGDGSSDLYAQQVGLLVGEILDIPVVNGVSKIISLTTDTLTVERELEDETETLSIPLPAVVAVSTDINSPQIPSMKAILGAAKKPVQVWSAADIGFNAVEAWSEQQVAAPKQRERQRIVIEGDGEEQIAAFAENLRKVI</sequence>
<name>FIXA_ESCF3</name>
<accession>B7LWN2</accession>
<reference key="1">
    <citation type="journal article" date="2009" name="PLoS Genet.">
        <title>Organised genome dynamics in the Escherichia coli species results in highly diverse adaptive paths.</title>
        <authorList>
            <person name="Touchon M."/>
            <person name="Hoede C."/>
            <person name="Tenaillon O."/>
            <person name="Barbe V."/>
            <person name="Baeriswyl S."/>
            <person name="Bidet P."/>
            <person name="Bingen E."/>
            <person name="Bonacorsi S."/>
            <person name="Bouchier C."/>
            <person name="Bouvet O."/>
            <person name="Calteau A."/>
            <person name="Chiapello H."/>
            <person name="Clermont O."/>
            <person name="Cruveiller S."/>
            <person name="Danchin A."/>
            <person name="Diard M."/>
            <person name="Dossat C."/>
            <person name="Karoui M.E."/>
            <person name="Frapy E."/>
            <person name="Garry L."/>
            <person name="Ghigo J.M."/>
            <person name="Gilles A.M."/>
            <person name="Johnson J."/>
            <person name="Le Bouguenec C."/>
            <person name="Lescat M."/>
            <person name="Mangenot S."/>
            <person name="Martinez-Jehanne V."/>
            <person name="Matic I."/>
            <person name="Nassif X."/>
            <person name="Oztas S."/>
            <person name="Petit M.A."/>
            <person name="Pichon C."/>
            <person name="Rouy Z."/>
            <person name="Ruf C.S."/>
            <person name="Schneider D."/>
            <person name="Tourret J."/>
            <person name="Vacherie B."/>
            <person name="Vallenet D."/>
            <person name="Medigue C."/>
            <person name="Rocha E.P.C."/>
            <person name="Denamur E."/>
        </authorList>
    </citation>
    <scope>NUCLEOTIDE SEQUENCE [LARGE SCALE GENOMIC DNA]</scope>
    <source>
        <strain>ATCC 35469 / DSM 13698 / BCRC 15582 / CCUG 18766 / IAM 14443 / JCM 21226 / LMG 7866 / NBRC 102419 / NCTC 12128 / CDC 0568-73</strain>
    </source>
</reference>